<feature type="initiator methionine" description="Removed" evidence="3">
    <location>
        <position position="1"/>
    </location>
</feature>
<feature type="chain" id="PRO_0000073848" description="Calcineurin B homologous protein 2">
    <location>
        <begin position="2"/>
        <end position="196"/>
    </location>
</feature>
<feature type="domain" description="EF-hand 1" evidence="4">
    <location>
        <begin position="26"/>
        <end position="61"/>
    </location>
</feature>
<feature type="domain" description="EF-hand 2" evidence="10">
    <location>
        <begin position="71"/>
        <end position="106"/>
    </location>
</feature>
<feature type="domain" description="EF-hand 3" evidence="4">
    <location>
        <begin position="111"/>
        <end position="146"/>
    </location>
</feature>
<feature type="domain" description="EF-hand 4" evidence="4">
    <location>
        <begin position="152"/>
        <end position="187"/>
    </location>
</feature>
<feature type="short sequence motif" description="Nuclear export signal">
    <location>
        <begin position="137"/>
        <end position="148"/>
    </location>
</feature>
<feature type="binding site" evidence="4">
    <location>
        <position position="124"/>
    </location>
    <ligand>
        <name>Ca(2+)</name>
        <dbReference type="ChEBI" id="CHEBI:29108"/>
        <label>1</label>
    </ligand>
</feature>
<feature type="binding site" evidence="4">
    <location>
        <position position="126"/>
    </location>
    <ligand>
        <name>Ca(2+)</name>
        <dbReference type="ChEBI" id="CHEBI:29108"/>
        <label>1</label>
    </ligand>
</feature>
<feature type="binding site" evidence="4">
    <location>
        <position position="128"/>
    </location>
    <ligand>
        <name>Ca(2+)</name>
        <dbReference type="ChEBI" id="CHEBI:29108"/>
        <label>1</label>
    </ligand>
</feature>
<feature type="binding site" evidence="4">
    <location>
        <position position="130"/>
    </location>
    <ligand>
        <name>Ca(2+)</name>
        <dbReference type="ChEBI" id="CHEBI:29108"/>
        <label>1</label>
    </ligand>
</feature>
<feature type="binding site" evidence="4">
    <location>
        <position position="135"/>
    </location>
    <ligand>
        <name>Ca(2+)</name>
        <dbReference type="ChEBI" id="CHEBI:29108"/>
        <label>1</label>
    </ligand>
</feature>
<feature type="binding site" evidence="4">
    <location>
        <position position="165"/>
    </location>
    <ligand>
        <name>Ca(2+)</name>
        <dbReference type="ChEBI" id="CHEBI:29108"/>
        <label>2</label>
    </ligand>
</feature>
<feature type="binding site" evidence="4">
    <location>
        <position position="167"/>
    </location>
    <ligand>
        <name>Ca(2+)</name>
        <dbReference type="ChEBI" id="CHEBI:29108"/>
        <label>2</label>
    </ligand>
</feature>
<feature type="binding site" evidence="4">
    <location>
        <position position="169"/>
    </location>
    <ligand>
        <name>Ca(2+)</name>
        <dbReference type="ChEBI" id="CHEBI:29108"/>
        <label>2</label>
    </ligand>
</feature>
<feature type="binding site" evidence="4">
    <location>
        <position position="176"/>
    </location>
    <ligand>
        <name>Ca(2+)</name>
        <dbReference type="ChEBI" id="CHEBI:29108"/>
        <label>2</label>
    </ligand>
</feature>
<feature type="modified residue" description="Phosphoserine" evidence="2">
    <location>
        <position position="27"/>
    </location>
</feature>
<feature type="lipid moiety-binding region" description="N-myristoyl glycine" evidence="3">
    <location>
        <position position="2"/>
    </location>
</feature>
<feature type="sequence variant" id="VAR_048664" description="In dbSNP:rs35641939.">
    <original>R</original>
    <variation>P</variation>
    <location>
        <position position="127"/>
    </location>
</feature>
<feature type="mutagenesis site" description="Does not reduce calcium-binding." evidence="9">
    <original>D</original>
    <variation>A</variation>
    <location>
        <position position="50"/>
    </location>
</feature>
<feature type="mutagenesis site" description="Does not reduce calcium-binding." evidence="9">
    <original>G</original>
    <variation>A</variation>
    <location>
        <position position="82"/>
    </location>
</feature>
<feature type="mutagenesis site" description="Reduces calcium-binding. Inhibits calcium-binding and cell membrane localization; when associated with A-176." evidence="9">
    <original>E</original>
    <variation>A</variation>
    <location>
        <position position="135"/>
    </location>
</feature>
<feature type="mutagenesis site" description="Localizes in the nucleus and increases cell proliferation." evidence="9">
    <original>LQVLRLMVGVQV</original>
    <variation>AQVARAMAGAQA</variation>
    <location>
        <begin position="137"/>
        <end position="148"/>
    </location>
</feature>
<feature type="mutagenesis site" description="Reduces calcium-binding. Inhibits calcium-binding and cell membrane localization; when associated with A-135." evidence="9">
    <original>E</original>
    <variation>A</variation>
    <location>
        <position position="176"/>
    </location>
</feature>
<feature type="turn" evidence="11">
    <location>
        <begin position="14"/>
        <end position="16"/>
    </location>
</feature>
<feature type="helix" evidence="11">
    <location>
        <begin position="17"/>
        <end position="21"/>
    </location>
</feature>
<feature type="helix" evidence="11">
    <location>
        <begin position="25"/>
        <end position="38"/>
    </location>
</feature>
<feature type="helix" evidence="11">
    <location>
        <begin position="48"/>
        <end position="52"/>
    </location>
</feature>
<feature type="helix" evidence="11">
    <location>
        <begin position="55"/>
        <end position="59"/>
    </location>
</feature>
<feature type="helix" evidence="11">
    <location>
        <begin position="63"/>
        <end position="68"/>
    </location>
</feature>
<feature type="helix" evidence="11">
    <location>
        <begin position="80"/>
        <end position="87"/>
    </location>
</feature>
<feature type="helix" evidence="11">
    <location>
        <begin position="88"/>
        <end position="90"/>
    </location>
</feature>
<feature type="helix" evidence="11">
    <location>
        <begin position="95"/>
        <end position="98"/>
    </location>
</feature>
<feature type="helix" evidence="11">
    <location>
        <begin position="112"/>
        <end position="123"/>
    </location>
</feature>
<feature type="strand" evidence="11">
    <location>
        <begin position="128"/>
        <end position="131"/>
    </location>
</feature>
<feature type="helix" evidence="11">
    <location>
        <begin position="133"/>
        <end position="142"/>
    </location>
</feature>
<feature type="helix" evidence="11">
    <location>
        <begin position="150"/>
        <end position="164"/>
    </location>
</feature>
<feature type="strand" evidence="11">
    <location>
        <begin position="169"/>
        <end position="173"/>
    </location>
</feature>
<feature type="helix" evidence="11">
    <location>
        <begin position="174"/>
        <end position="179"/>
    </location>
</feature>
<feature type="turn" evidence="11">
    <location>
        <begin position="180"/>
        <end position="183"/>
    </location>
</feature>
<feature type="helix" evidence="11">
    <location>
        <begin position="186"/>
        <end position="189"/>
    </location>
</feature>
<feature type="turn" evidence="11">
    <location>
        <begin position="193"/>
        <end position="195"/>
    </location>
</feature>
<comment type="function">
    <text evidence="6 8">Functions as an integral cofactor in cell pH regulation by controlling plasma membrane-type Na(+)/H(+) exchange activity. Binds to and activates SLC9A1/NHE1 in a serum-independent manner, thus increasing pH and protecting cells from serum deprivation-induced death. Also plays a role in the regulation of cell proliferation and tumor growth by increasing the phosphatase activity of PPP3CA in a calcium-dependent manner. Activator of the calcineurin/NFAT signaling pathway. Involved in the cytoplasmic translocation of the transcription factor NFATC3 to the nucleus.</text>
</comment>
<comment type="subunit">
    <text evidence="6 7 8 9">Interacts with PPP3CA. Interacts with SLC9A1/NHE1; the interaction occurs in a calcium-dependent manner.</text>
</comment>
<comment type="interaction">
    <interactant intactId="EBI-8525536">
        <id>O43745</id>
    </interactant>
    <interactant intactId="EBI-724076">
        <id>Q99750</id>
        <label>MDFI</label>
    </interactant>
    <organismsDiffer>false</organismsDiffer>
    <experiments>3</experiments>
</comment>
<comment type="interaction">
    <interactant intactId="EBI-8525536">
        <id>O43745</id>
    </interactant>
    <interactant intactId="EBI-743635">
        <id>P19634</id>
        <label>SLC9A1</label>
    </interactant>
    <organismsDiffer>false</organismsDiffer>
    <experiments>5</experiments>
</comment>
<comment type="subcellular location">
    <subcellularLocation>
        <location evidence="9">Nucleus</location>
    </subcellularLocation>
    <subcellularLocation>
        <location evidence="9">Cytoplasm</location>
    </subcellularLocation>
    <subcellularLocation>
        <location evidence="9">Cell membrane</location>
    </subcellularLocation>
    <text evidence="1">Predominantly localized in a juxtanuclear region. Colocalizes with SLC9A3 in the juxtanuclear region and at the plasma membrane (By similarity). Exported from the nucleus to the cytoplasm through a nuclear export signal (NES) pathway. May shuttle between nucleus and cytoplasm.</text>
</comment>
<comment type="tissue specificity">
    <text evidence="5 6">Expressed in malignantly transformed cells but not detected in normal tissues.</text>
</comment>
<comment type="similarity">
    <text evidence="10">Belongs to the calcineurin regulatory subunit family. CHP subfamily.</text>
</comment>
<organism>
    <name type="scientific">Homo sapiens</name>
    <name type="common">Human</name>
    <dbReference type="NCBI Taxonomy" id="9606"/>
    <lineage>
        <taxon>Eukaryota</taxon>
        <taxon>Metazoa</taxon>
        <taxon>Chordata</taxon>
        <taxon>Craniata</taxon>
        <taxon>Vertebrata</taxon>
        <taxon>Euteleostomi</taxon>
        <taxon>Mammalia</taxon>
        <taxon>Eutheria</taxon>
        <taxon>Euarchontoglires</taxon>
        <taxon>Primates</taxon>
        <taxon>Haplorrhini</taxon>
        <taxon>Catarrhini</taxon>
        <taxon>Hominidae</taxon>
        <taxon>Homo</taxon>
    </lineage>
</organism>
<evidence type="ECO:0000250" key="1"/>
<evidence type="ECO:0000250" key="2">
    <source>
        <dbReference type="UniProtKB" id="Q810D1"/>
    </source>
</evidence>
<evidence type="ECO:0000255" key="3"/>
<evidence type="ECO:0000255" key="4">
    <source>
        <dbReference type="PROSITE-ProRule" id="PRU00448"/>
    </source>
</evidence>
<evidence type="ECO:0000269" key="5">
    <source>
    </source>
</evidence>
<evidence type="ECO:0000269" key="6">
    <source>
    </source>
</evidence>
<evidence type="ECO:0000269" key="7">
    <source>
    </source>
</evidence>
<evidence type="ECO:0000269" key="8">
    <source>
    </source>
</evidence>
<evidence type="ECO:0000269" key="9">
    <source>
    </source>
</evidence>
<evidence type="ECO:0000305" key="10"/>
<evidence type="ECO:0007829" key="11">
    <source>
        <dbReference type="PDB" id="2BEC"/>
    </source>
</evidence>
<name>CHP2_HUMAN</name>
<accession>O43745</accession>
<accession>A8K2I8</accession>
<keyword id="KW-0002">3D-structure</keyword>
<keyword id="KW-0106">Calcium</keyword>
<keyword id="KW-1003">Cell membrane</keyword>
<keyword id="KW-0963">Cytoplasm</keyword>
<keyword id="KW-0449">Lipoprotein</keyword>
<keyword id="KW-0472">Membrane</keyword>
<keyword id="KW-0479">Metal-binding</keyword>
<keyword id="KW-0519">Myristate</keyword>
<keyword id="KW-0539">Nucleus</keyword>
<keyword id="KW-0597">Phosphoprotein</keyword>
<keyword id="KW-0653">Protein transport</keyword>
<keyword id="KW-1267">Proteomics identification</keyword>
<keyword id="KW-1185">Reference proteome</keyword>
<keyword id="KW-0677">Repeat</keyword>
<keyword id="KW-0813">Transport</keyword>
<proteinExistence type="evidence at protein level"/>
<gene>
    <name type="primary">CHP2</name>
    <name type="synonym">HCA520</name>
</gene>
<sequence>MGSRSSHAAVIPDGDSIRRETGFSQASLLRLHHRFRALDRNKKGYLSRMDLQQIGALAVNPLGDRIIESFFPDGSQRVDFPGFVRVLAHFRPVEDEDTETQDPKKPEPLNSRRNKLHYAFQLYDLDRDGKISRHEMLQVLRLMVGVQVTEEQLENIADRTVQEADEDGDGAVSFVEFTKSLEKMDVEQKMSIRILK</sequence>
<protein>
    <recommendedName>
        <fullName>Calcineurin B homologous protein 2</fullName>
    </recommendedName>
    <alternativeName>
        <fullName>Hepatocellular carcinoma-associated antigen 520</fullName>
    </alternativeName>
</protein>
<reference key="1">
    <citation type="journal article" date="2002" name="J. Immunol.">
        <title>Large scale identification of human hepatocellular carcinoma-associated antigens by autoantibodies.</title>
        <authorList>
            <person name="Wang Y."/>
            <person name="Han K.-J."/>
            <person name="Pang X.-W."/>
            <person name="Vaughan H.A."/>
            <person name="Qu W."/>
            <person name="Dong X.-Y."/>
            <person name="Peng J.-R."/>
            <person name="Zhao H.-T."/>
            <person name="Rui J.-A."/>
            <person name="Leng X.-S."/>
            <person name="Cebon J."/>
            <person name="Burgess A.W."/>
            <person name="Chen W.-F."/>
        </authorList>
    </citation>
    <scope>NUCLEOTIDE SEQUENCE [LARGE SCALE MRNA]</scope>
    <scope>TISSUE SPECIFICITY</scope>
    <source>
        <tissue>Hepatoma</tissue>
    </source>
</reference>
<reference key="2">
    <citation type="journal article" date="2004" name="Nat. Genet.">
        <title>Complete sequencing and characterization of 21,243 full-length human cDNAs.</title>
        <authorList>
            <person name="Ota T."/>
            <person name="Suzuki Y."/>
            <person name="Nishikawa T."/>
            <person name="Otsuki T."/>
            <person name="Sugiyama T."/>
            <person name="Irie R."/>
            <person name="Wakamatsu A."/>
            <person name="Hayashi K."/>
            <person name="Sato H."/>
            <person name="Nagai K."/>
            <person name="Kimura K."/>
            <person name="Makita H."/>
            <person name="Sekine M."/>
            <person name="Obayashi M."/>
            <person name="Nishi T."/>
            <person name="Shibahara T."/>
            <person name="Tanaka T."/>
            <person name="Ishii S."/>
            <person name="Yamamoto J."/>
            <person name="Saito K."/>
            <person name="Kawai Y."/>
            <person name="Isono Y."/>
            <person name="Nakamura Y."/>
            <person name="Nagahari K."/>
            <person name="Murakami K."/>
            <person name="Yasuda T."/>
            <person name="Iwayanagi T."/>
            <person name="Wagatsuma M."/>
            <person name="Shiratori A."/>
            <person name="Sudo H."/>
            <person name="Hosoiri T."/>
            <person name="Kaku Y."/>
            <person name="Kodaira H."/>
            <person name="Kondo H."/>
            <person name="Sugawara M."/>
            <person name="Takahashi M."/>
            <person name="Kanda K."/>
            <person name="Yokoi T."/>
            <person name="Furuya T."/>
            <person name="Kikkawa E."/>
            <person name="Omura Y."/>
            <person name="Abe K."/>
            <person name="Kamihara K."/>
            <person name="Katsuta N."/>
            <person name="Sato K."/>
            <person name="Tanikawa M."/>
            <person name="Yamazaki M."/>
            <person name="Ninomiya K."/>
            <person name="Ishibashi T."/>
            <person name="Yamashita H."/>
            <person name="Murakawa K."/>
            <person name="Fujimori K."/>
            <person name="Tanai H."/>
            <person name="Kimata M."/>
            <person name="Watanabe M."/>
            <person name="Hiraoka S."/>
            <person name="Chiba Y."/>
            <person name="Ishida S."/>
            <person name="Ono Y."/>
            <person name="Takiguchi S."/>
            <person name="Watanabe S."/>
            <person name="Yosida M."/>
            <person name="Hotuta T."/>
            <person name="Kusano J."/>
            <person name="Kanehori K."/>
            <person name="Takahashi-Fujii A."/>
            <person name="Hara H."/>
            <person name="Tanase T.-O."/>
            <person name="Nomura Y."/>
            <person name="Togiya S."/>
            <person name="Komai F."/>
            <person name="Hara R."/>
            <person name="Takeuchi K."/>
            <person name="Arita M."/>
            <person name="Imose N."/>
            <person name="Musashino K."/>
            <person name="Yuuki H."/>
            <person name="Oshima A."/>
            <person name="Sasaki N."/>
            <person name="Aotsuka S."/>
            <person name="Yoshikawa Y."/>
            <person name="Matsunawa H."/>
            <person name="Ichihara T."/>
            <person name="Shiohata N."/>
            <person name="Sano S."/>
            <person name="Moriya S."/>
            <person name="Momiyama H."/>
            <person name="Satoh N."/>
            <person name="Takami S."/>
            <person name="Terashima Y."/>
            <person name="Suzuki O."/>
            <person name="Nakagawa S."/>
            <person name="Senoh A."/>
            <person name="Mizoguchi H."/>
            <person name="Goto Y."/>
            <person name="Shimizu F."/>
            <person name="Wakebe H."/>
            <person name="Hishigaki H."/>
            <person name="Watanabe T."/>
            <person name="Sugiyama A."/>
            <person name="Takemoto M."/>
            <person name="Kawakami B."/>
            <person name="Yamazaki M."/>
            <person name="Watanabe K."/>
            <person name="Kumagai A."/>
            <person name="Itakura S."/>
            <person name="Fukuzumi Y."/>
            <person name="Fujimori Y."/>
            <person name="Komiyama M."/>
            <person name="Tashiro H."/>
            <person name="Tanigami A."/>
            <person name="Fujiwara T."/>
            <person name="Ono T."/>
            <person name="Yamada K."/>
            <person name="Fujii Y."/>
            <person name="Ozaki K."/>
            <person name="Hirao M."/>
            <person name="Ohmori Y."/>
            <person name="Kawabata A."/>
            <person name="Hikiji T."/>
            <person name="Kobatake N."/>
            <person name="Inagaki H."/>
            <person name="Ikema Y."/>
            <person name="Okamoto S."/>
            <person name="Okitani R."/>
            <person name="Kawakami T."/>
            <person name="Noguchi S."/>
            <person name="Itoh T."/>
            <person name="Shigeta K."/>
            <person name="Senba T."/>
            <person name="Matsumura K."/>
            <person name="Nakajima Y."/>
            <person name="Mizuno T."/>
            <person name="Morinaga M."/>
            <person name="Sasaki M."/>
            <person name="Togashi T."/>
            <person name="Oyama M."/>
            <person name="Hata H."/>
            <person name="Watanabe M."/>
            <person name="Komatsu T."/>
            <person name="Mizushima-Sugano J."/>
            <person name="Satoh T."/>
            <person name="Shirai Y."/>
            <person name="Takahashi Y."/>
            <person name="Nakagawa K."/>
            <person name="Okumura K."/>
            <person name="Nagase T."/>
            <person name="Nomura N."/>
            <person name="Kikuchi H."/>
            <person name="Masuho Y."/>
            <person name="Yamashita R."/>
            <person name="Nakai K."/>
            <person name="Yada T."/>
            <person name="Nakamura Y."/>
            <person name="Ohara O."/>
            <person name="Isogai T."/>
            <person name="Sugano S."/>
        </authorList>
    </citation>
    <scope>NUCLEOTIDE SEQUENCE [LARGE SCALE MRNA]</scope>
    <source>
        <tissue>Caudate nucleus</tissue>
        <tissue>Colon</tissue>
    </source>
</reference>
<reference key="3">
    <citation type="journal article" date="2006" name="Nature">
        <title>The finished DNA sequence of human chromosome 12.</title>
        <authorList>
            <person name="Scherer S.E."/>
            <person name="Muzny D.M."/>
            <person name="Buhay C.J."/>
            <person name="Chen R."/>
            <person name="Cree A."/>
            <person name="Ding Y."/>
            <person name="Dugan-Rocha S."/>
            <person name="Gill R."/>
            <person name="Gunaratne P."/>
            <person name="Harris R.A."/>
            <person name="Hawes A.C."/>
            <person name="Hernandez J."/>
            <person name="Hodgson A.V."/>
            <person name="Hume J."/>
            <person name="Jackson A."/>
            <person name="Khan Z.M."/>
            <person name="Kovar-Smith C."/>
            <person name="Lewis L.R."/>
            <person name="Lozado R.J."/>
            <person name="Metzker M.L."/>
            <person name="Milosavljevic A."/>
            <person name="Miner G.R."/>
            <person name="Montgomery K.T."/>
            <person name="Morgan M.B."/>
            <person name="Nazareth L.V."/>
            <person name="Scott G."/>
            <person name="Sodergren E."/>
            <person name="Song X.-Z."/>
            <person name="Steffen D."/>
            <person name="Lovering R.C."/>
            <person name="Wheeler D.A."/>
            <person name="Worley K.C."/>
            <person name="Yuan Y."/>
            <person name="Zhang Z."/>
            <person name="Adams C.Q."/>
            <person name="Ansari-Lari M.A."/>
            <person name="Ayele M."/>
            <person name="Brown M.J."/>
            <person name="Chen G."/>
            <person name="Chen Z."/>
            <person name="Clerc-Blankenburg K.P."/>
            <person name="Davis C."/>
            <person name="Delgado O."/>
            <person name="Dinh H.H."/>
            <person name="Draper H."/>
            <person name="Gonzalez-Garay M.L."/>
            <person name="Havlak P."/>
            <person name="Jackson L.R."/>
            <person name="Jacob L.S."/>
            <person name="Kelly S.H."/>
            <person name="Li L."/>
            <person name="Li Z."/>
            <person name="Liu J."/>
            <person name="Liu W."/>
            <person name="Lu J."/>
            <person name="Maheshwari M."/>
            <person name="Nguyen B.-V."/>
            <person name="Okwuonu G.O."/>
            <person name="Pasternak S."/>
            <person name="Perez L.M."/>
            <person name="Plopper F.J.H."/>
            <person name="Santibanez J."/>
            <person name="Shen H."/>
            <person name="Tabor P.E."/>
            <person name="Verduzco D."/>
            <person name="Waldron L."/>
            <person name="Wang Q."/>
            <person name="Williams G.A."/>
            <person name="Zhang J."/>
            <person name="Zhou J."/>
            <person name="Allen C.C."/>
            <person name="Amin A.G."/>
            <person name="Anyalebechi V."/>
            <person name="Bailey M."/>
            <person name="Barbaria J.A."/>
            <person name="Bimage K.E."/>
            <person name="Bryant N.P."/>
            <person name="Burch P.E."/>
            <person name="Burkett C.E."/>
            <person name="Burrell K.L."/>
            <person name="Calderon E."/>
            <person name="Cardenas V."/>
            <person name="Carter K."/>
            <person name="Casias K."/>
            <person name="Cavazos I."/>
            <person name="Cavazos S.R."/>
            <person name="Ceasar H."/>
            <person name="Chacko J."/>
            <person name="Chan S.N."/>
            <person name="Chavez D."/>
            <person name="Christopoulos C."/>
            <person name="Chu J."/>
            <person name="Cockrell R."/>
            <person name="Cox C.D."/>
            <person name="Dang M."/>
            <person name="Dathorne S.R."/>
            <person name="David R."/>
            <person name="Davis C.M."/>
            <person name="Davy-Carroll L."/>
            <person name="Deshazo D.R."/>
            <person name="Donlin J.E."/>
            <person name="D'Souza L."/>
            <person name="Eaves K.A."/>
            <person name="Egan A."/>
            <person name="Emery-Cohen A.J."/>
            <person name="Escotto M."/>
            <person name="Flagg N."/>
            <person name="Forbes L.D."/>
            <person name="Gabisi A.M."/>
            <person name="Garza M."/>
            <person name="Hamilton C."/>
            <person name="Henderson N."/>
            <person name="Hernandez O."/>
            <person name="Hines S."/>
            <person name="Hogues M.E."/>
            <person name="Huang M."/>
            <person name="Idlebird D.G."/>
            <person name="Johnson R."/>
            <person name="Jolivet A."/>
            <person name="Jones S."/>
            <person name="Kagan R."/>
            <person name="King L.M."/>
            <person name="Leal B."/>
            <person name="Lebow H."/>
            <person name="Lee S."/>
            <person name="LeVan J.M."/>
            <person name="Lewis L.C."/>
            <person name="London P."/>
            <person name="Lorensuhewa L.M."/>
            <person name="Loulseged H."/>
            <person name="Lovett D.A."/>
            <person name="Lucier A."/>
            <person name="Lucier R.L."/>
            <person name="Ma J."/>
            <person name="Madu R.C."/>
            <person name="Mapua P."/>
            <person name="Martindale A.D."/>
            <person name="Martinez E."/>
            <person name="Massey E."/>
            <person name="Mawhiney S."/>
            <person name="Meador M.G."/>
            <person name="Mendez S."/>
            <person name="Mercado C."/>
            <person name="Mercado I.C."/>
            <person name="Merritt C.E."/>
            <person name="Miner Z.L."/>
            <person name="Minja E."/>
            <person name="Mitchell T."/>
            <person name="Mohabbat F."/>
            <person name="Mohabbat K."/>
            <person name="Montgomery B."/>
            <person name="Moore N."/>
            <person name="Morris S."/>
            <person name="Munidasa M."/>
            <person name="Ngo R.N."/>
            <person name="Nguyen N.B."/>
            <person name="Nickerson E."/>
            <person name="Nwaokelemeh O.O."/>
            <person name="Nwokenkwo S."/>
            <person name="Obregon M."/>
            <person name="Oguh M."/>
            <person name="Oragunye N."/>
            <person name="Oviedo R.J."/>
            <person name="Parish B.J."/>
            <person name="Parker D.N."/>
            <person name="Parrish J."/>
            <person name="Parks K.L."/>
            <person name="Paul H.A."/>
            <person name="Payton B.A."/>
            <person name="Perez A."/>
            <person name="Perrin W."/>
            <person name="Pickens A."/>
            <person name="Primus E.L."/>
            <person name="Pu L.-L."/>
            <person name="Puazo M."/>
            <person name="Quiles M.M."/>
            <person name="Quiroz J.B."/>
            <person name="Rabata D."/>
            <person name="Reeves K."/>
            <person name="Ruiz S.J."/>
            <person name="Shao H."/>
            <person name="Sisson I."/>
            <person name="Sonaike T."/>
            <person name="Sorelle R.P."/>
            <person name="Sutton A.E."/>
            <person name="Svatek A.F."/>
            <person name="Svetz L.A."/>
            <person name="Tamerisa K.S."/>
            <person name="Taylor T.R."/>
            <person name="Teague B."/>
            <person name="Thomas N."/>
            <person name="Thorn R.D."/>
            <person name="Trejos Z.Y."/>
            <person name="Trevino B.K."/>
            <person name="Ukegbu O.N."/>
            <person name="Urban J.B."/>
            <person name="Vasquez L.I."/>
            <person name="Vera V.A."/>
            <person name="Villasana D.M."/>
            <person name="Wang L."/>
            <person name="Ward-Moore S."/>
            <person name="Warren J.T."/>
            <person name="Wei X."/>
            <person name="White F."/>
            <person name="Williamson A.L."/>
            <person name="Wleczyk R."/>
            <person name="Wooden H.S."/>
            <person name="Wooden S.H."/>
            <person name="Yen J."/>
            <person name="Yoon L."/>
            <person name="Yoon V."/>
            <person name="Zorrilla S.E."/>
            <person name="Nelson D."/>
            <person name="Kucherlapati R."/>
            <person name="Weinstock G."/>
            <person name="Gibbs R.A."/>
        </authorList>
    </citation>
    <scope>NUCLEOTIDE SEQUENCE [LARGE SCALE GENOMIC DNA]</scope>
</reference>
<reference key="4">
    <citation type="submission" date="2005-07" db="EMBL/GenBank/DDBJ databases">
        <authorList>
            <person name="Mural R.J."/>
            <person name="Istrail S."/>
            <person name="Sutton G."/>
            <person name="Florea L."/>
            <person name="Halpern A.L."/>
            <person name="Mobarry C.M."/>
            <person name="Lippert R."/>
            <person name="Walenz B."/>
            <person name="Shatkay H."/>
            <person name="Dew I."/>
            <person name="Miller J.R."/>
            <person name="Flanigan M.J."/>
            <person name="Edwards N.J."/>
            <person name="Bolanos R."/>
            <person name="Fasulo D."/>
            <person name="Halldorsson B.V."/>
            <person name="Hannenhalli S."/>
            <person name="Turner R."/>
            <person name="Yooseph S."/>
            <person name="Lu F."/>
            <person name="Nusskern D.R."/>
            <person name="Shue B.C."/>
            <person name="Zheng X.H."/>
            <person name="Zhong F."/>
            <person name="Delcher A.L."/>
            <person name="Huson D.H."/>
            <person name="Kravitz S.A."/>
            <person name="Mouchard L."/>
            <person name="Reinert K."/>
            <person name="Remington K.A."/>
            <person name="Clark A.G."/>
            <person name="Waterman M.S."/>
            <person name="Eichler E.E."/>
            <person name="Adams M.D."/>
            <person name="Hunkapiller M.W."/>
            <person name="Myers E.W."/>
            <person name="Venter J.C."/>
        </authorList>
    </citation>
    <scope>NUCLEOTIDE SEQUENCE [LARGE SCALE GENOMIC DNA]</scope>
</reference>
<reference key="5">
    <citation type="journal article" date="2002" name="J. Biol. Chem.">
        <title>Expression of calcineurin B homologous protein 2 protects serum deprivation-induced cell death by serum-independent activation of Na+/H+ exchanger.</title>
        <authorList>
            <person name="Pang T."/>
            <person name="Wakabayashi S."/>
            <person name="Shigekawa M."/>
        </authorList>
    </citation>
    <scope>FUNCTION</scope>
    <scope>TISSUE SPECIFICITY</scope>
    <scope>INTERACTION WITH SLC9A1</scope>
</reference>
<reference key="6">
    <citation type="journal article" date="2008" name="J. Biol. Chem.">
        <title>CHP2 activates the calcineurin/nuclear factor of activated T cells signaling pathway and enhances the oncogenic potential of HEK293 cells.</title>
        <authorList>
            <person name="Li G.D."/>
            <person name="Zhang X."/>
            <person name="Li R."/>
            <person name="Wang Y.D."/>
            <person name="Wang Y.L."/>
            <person name="Han K.J."/>
            <person name="Qian X.P."/>
            <person name="Yang C.G."/>
            <person name="Liu P."/>
            <person name="Wei Q."/>
            <person name="Chen W.F."/>
            <person name="Zhang J."/>
            <person name="Zhang Y."/>
        </authorList>
    </citation>
    <scope>FUNCTION AS A CALCINEURIN ACTIVATOR</scope>
    <scope>INTERACTION WITH PPP3CA</scope>
</reference>
<reference key="7">
    <citation type="journal article" date="2011" name="Genes Cells">
        <title>Nuclear accumulation of calcineurin B homologous protein 2 (CHP2) results in enhanced proliferation of tumor cells.</title>
        <authorList>
            <person name="Li Q.H."/>
            <person name="Wang L.H."/>
            <person name="Lin Y.N."/>
            <person name="Chang G.Q."/>
            <person name="Li H.W."/>
            <person name="Jin W.N."/>
            <person name="Hu R.H."/>
            <person name="Pang T.X."/>
        </authorList>
    </citation>
    <scope>INTERACTION WITH SLC9A1</scope>
    <scope>SUBCELLULAR LOCATION</scope>
    <scope>MUTAGENESIS OF ASP-50; GLY-82; GLU-135; 137-LEU--VAL-148 AND GLU-176</scope>
</reference>
<reference key="8">
    <citation type="journal article" date="2005" name="Acta Crystallogr. F">
        <title>Crystallization and preliminary crystallographic analysis of the human calcineurin homologous protein CHP2 bound to the cytoplasmic region of the Na+/H+ exchanger NHE1.</title>
        <authorList>
            <person name="Ben Ammar Y."/>
            <person name="Takeda S."/>
            <person name="Sugawara M."/>
            <person name="Miyano M."/>
            <person name="Mori H."/>
            <person name="Wakabayashi S."/>
        </authorList>
    </citation>
    <scope>PRELIMINARY X-RAY CRYSTALLOGRAPHY OF 1-195 IN COMPLEX WITH SLC9A1</scope>
</reference>
<reference key="9">
    <citation type="journal article" date="2006" name="EMBO J.">
        <title>Crystal structure of CHP2 complexed with NHE1-cytosolic region and an implication for pH regulation.</title>
        <authorList>
            <person name="Ammar Y.B."/>
            <person name="Takeda S."/>
            <person name="Hisamitsu T."/>
            <person name="Mori H."/>
            <person name="Wakabayashi S."/>
        </authorList>
    </citation>
    <scope>X-RAY CRYSTALLOGRAPHY (2.7 ANGSTROMS) OF 1-195 IN COMPLEX WITH SLC9A1</scope>
</reference>
<dbReference type="EMBL" id="AF146019">
    <property type="protein sequence ID" value="AAG14945.1"/>
    <property type="molecule type" value="mRNA"/>
</dbReference>
<dbReference type="EMBL" id="AK290253">
    <property type="protein sequence ID" value="BAF82942.1"/>
    <property type="molecule type" value="mRNA"/>
</dbReference>
<dbReference type="EMBL" id="AK313062">
    <property type="protein sequence ID" value="BAG35891.1"/>
    <property type="molecule type" value="mRNA"/>
</dbReference>
<dbReference type="EMBL" id="AC130454">
    <property type="status" value="NOT_ANNOTATED_CDS"/>
    <property type="molecule type" value="Genomic_DNA"/>
</dbReference>
<dbReference type="EMBL" id="CH471145">
    <property type="protein sequence ID" value="EAW55801.1"/>
    <property type="molecule type" value="Genomic_DNA"/>
</dbReference>
<dbReference type="CCDS" id="CCDS10617.1"/>
<dbReference type="RefSeq" id="NP_071380.1">
    <property type="nucleotide sequence ID" value="NM_022097.4"/>
</dbReference>
<dbReference type="PDB" id="2BEC">
    <property type="method" value="X-ray"/>
    <property type="resolution" value="2.70 A"/>
    <property type="chains" value="A=1-196"/>
</dbReference>
<dbReference type="PDBsum" id="2BEC"/>
<dbReference type="SMR" id="O43745"/>
<dbReference type="BioGRID" id="121996">
    <property type="interactions" value="39"/>
</dbReference>
<dbReference type="FunCoup" id="O43745">
    <property type="interactions" value="342"/>
</dbReference>
<dbReference type="IntAct" id="O43745">
    <property type="interactions" value="8"/>
</dbReference>
<dbReference type="MINT" id="O43745"/>
<dbReference type="STRING" id="9606.ENSP00000300113"/>
<dbReference type="iPTMnet" id="O43745"/>
<dbReference type="PhosphoSitePlus" id="O43745"/>
<dbReference type="BioMuta" id="CHP2"/>
<dbReference type="MassIVE" id="O43745"/>
<dbReference type="PaxDb" id="9606-ENSP00000300113"/>
<dbReference type="PeptideAtlas" id="O43745"/>
<dbReference type="ProteomicsDB" id="49145"/>
<dbReference type="Antibodypedia" id="59031">
    <property type="antibodies" value="89 antibodies from 24 providers"/>
</dbReference>
<dbReference type="CPTC" id="O43745">
    <property type="antibodies" value="3 antibodies"/>
</dbReference>
<dbReference type="DNASU" id="63928"/>
<dbReference type="Ensembl" id="ENST00000300113.3">
    <property type="protein sequence ID" value="ENSP00000300113.2"/>
    <property type="gene ID" value="ENSG00000166869.3"/>
</dbReference>
<dbReference type="GeneID" id="63928"/>
<dbReference type="KEGG" id="hsa:63928"/>
<dbReference type="MANE-Select" id="ENST00000300113.3">
    <property type="protein sequence ID" value="ENSP00000300113.2"/>
    <property type="RefSeq nucleotide sequence ID" value="NM_022097.4"/>
    <property type="RefSeq protein sequence ID" value="NP_071380.1"/>
</dbReference>
<dbReference type="UCSC" id="uc002dmb.2">
    <property type="organism name" value="human"/>
</dbReference>
<dbReference type="AGR" id="HGNC:24927"/>
<dbReference type="CTD" id="63928"/>
<dbReference type="DisGeNET" id="63928"/>
<dbReference type="GeneCards" id="CHP2"/>
<dbReference type="HGNC" id="HGNC:24927">
    <property type="gene designation" value="CHP2"/>
</dbReference>
<dbReference type="HPA" id="ENSG00000166869">
    <property type="expression patterns" value="Group enriched (intestine, skin)"/>
</dbReference>
<dbReference type="neXtProt" id="NX_O43745"/>
<dbReference type="OpenTargets" id="ENSG00000166869"/>
<dbReference type="VEuPathDB" id="HostDB:ENSG00000166869"/>
<dbReference type="eggNOG" id="KOG0034">
    <property type="taxonomic scope" value="Eukaryota"/>
</dbReference>
<dbReference type="GeneTree" id="ENSGT00940000161957"/>
<dbReference type="HOGENOM" id="CLU_061288_10_5_1"/>
<dbReference type="InParanoid" id="O43745"/>
<dbReference type="OMA" id="MMVGIQV"/>
<dbReference type="OrthoDB" id="191686at2759"/>
<dbReference type="PAN-GO" id="O43745">
    <property type="GO annotations" value="2 GO annotations based on evolutionary models"/>
</dbReference>
<dbReference type="PhylomeDB" id="O43745"/>
<dbReference type="TreeFam" id="TF354284"/>
<dbReference type="PathwayCommons" id="O43745"/>
<dbReference type="SignaLink" id="O43745"/>
<dbReference type="BioGRID-ORCS" id="63928">
    <property type="hits" value="11 hits in 1150 CRISPR screens"/>
</dbReference>
<dbReference type="EvolutionaryTrace" id="O43745"/>
<dbReference type="GenomeRNAi" id="63928"/>
<dbReference type="Pharos" id="O43745">
    <property type="development level" value="Tbio"/>
</dbReference>
<dbReference type="PRO" id="PR:O43745"/>
<dbReference type="Proteomes" id="UP000005640">
    <property type="component" value="Chromosome 16"/>
</dbReference>
<dbReference type="RNAct" id="O43745">
    <property type="molecule type" value="protein"/>
</dbReference>
<dbReference type="Bgee" id="ENSG00000166869">
    <property type="expression patterns" value="Expressed in mucosa of transverse colon and 124 other cell types or tissues"/>
</dbReference>
<dbReference type="GO" id="GO:0005737">
    <property type="term" value="C:cytoplasm"/>
    <property type="evidence" value="ECO:0000314"/>
    <property type="project" value="UniProtKB"/>
</dbReference>
<dbReference type="GO" id="GO:0005829">
    <property type="term" value="C:cytosol"/>
    <property type="evidence" value="ECO:0000314"/>
    <property type="project" value="HPA"/>
</dbReference>
<dbReference type="GO" id="GO:0005730">
    <property type="term" value="C:nucleolus"/>
    <property type="evidence" value="ECO:0000314"/>
    <property type="project" value="HPA"/>
</dbReference>
<dbReference type="GO" id="GO:0005654">
    <property type="term" value="C:nucleoplasm"/>
    <property type="evidence" value="ECO:0000314"/>
    <property type="project" value="HPA"/>
</dbReference>
<dbReference type="GO" id="GO:0005634">
    <property type="term" value="C:nucleus"/>
    <property type="evidence" value="ECO:0000314"/>
    <property type="project" value="UniProtKB"/>
</dbReference>
<dbReference type="GO" id="GO:0005886">
    <property type="term" value="C:plasma membrane"/>
    <property type="evidence" value="ECO:0000314"/>
    <property type="project" value="UniProtKB"/>
</dbReference>
<dbReference type="GO" id="GO:0005509">
    <property type="term" value="F:calcium ion binding"/>
    <property type="evidence" value="ECO:0000314"/>
    <property type="project" value="UniProtKB"/>
</dbReference>
<dbReference type="GO" id="GO:0071277">
    <property type="term" value="P:cellular response to calcium ion"/>
    <property type="evidence" value="ECO:0000314"/>
    <property type="project" value="UniProtKB"/>
</dbReference>
<dbReference type="GO" id="GO:0070886">
    <property type="term" value="P:positive regulation of calcineurin-NFAT signaling cascade"/>
    <property type="evidence" value="ECO:0000314"/>
    <property type="project" value="UniProtKB"/>
</dbReference>
<dbReference type="GO" id="GO:0008284">
    <property type="term" value="P:positive regulation of cell population proliferation"/>
    <property type="evidence" value="ECO:0000314"/>
    <property type="project" value="UniProtKB"/>
</dbReference>
<dbReference type="GO" id="GO:0010922">
    <property type="term" value="P:positive regulation of phosphatase activity"/>
    <property type="evidence" value="ECO:0000314"/>
    <property type="project" value="UniProtKB"/>
</dbReference>
<dbReference type="GO" id="GO:0042307">
    <property type="term" value="P:positive regulation of protein import into nucleus"/>
    <property type="evidence" value="ECO:0000314"/>
    <property type="project" value="UniProtKB"/>
</dbReference>
<dbReference type="GO" id="GO:0045944">
    <property type="term" value="P:positive regulation of transcription by RNA polymerase II"/>
    <property type="evidence" value="ECO:0000314"/>
    <property type="project" value="UniProtKB"/>
</dbReference>
<dbReference type="GO" id="GO:0015031">
    <property type="term" value="P:protein transport"/>
    <property type="evidence" value="ECO:0007669"/>
    <property type="project" value="UniProtKB-KW"/>
</dbReference>
<dbReference type="CDD" id="cd00051">
    <property type="entry name" value="EFh"/>
    <property type="match status" value="1"/>
</dbReference>
<dbReference type="FunFam" id="1.10.238.10:FF:000093">
    <property type="entry name" value="Calcineurin B homologous protein 1"/>
    <property type="match status" value="1"/>
</dbReference>
<dbReference type="Gene3D" id="1.10.238.10">
    <property type="entry name" value="EF-hand"/>
    <property type="match status" value="1"/>
</dbReference>
<dbReference type="InterPro" id="IPR051875">
    <property type="entry name" value="Calcineurin_B_homologous"/>
</dbReference>
<dbReference type="InterPro" id="IPR011992">
    <property type="entry name" value="EF-hand-dom_pair"/>
</dbReference>
<dbReference type="InterPro" id="IPR018247">
    <property type="entry name" value="EF_Hand_1_Ca_BS"/>
</dbReference>
<dbReference type="InterPro" id="IPR002048">
    <property type="entry name" value="EF_hand_dom"/>
</dbReference>
<dbReference type="PANTHER" id="PTHR46002">
    <property type="entry name" value="EG:114D9.1 PROTEIN-RELATED"/>
    <property type="match status" value="1"/>
</dbReference>
<dbReference type="Pfam" id="PF13202">
    <property type="entry name" value="EF-hand_5"/>
    <property type="match status" value="1"/>
</dbReference>
<dbReference type="Pfam" id="PF13499">
    <property type="entry name" value="EF-hand_7"/>
    <property type="match status" value="1"/>
</dbReference>
<dbReference type="SMART" id="SM00054">
    <property type="entry name" value="EFh"/>
    <property type="match status" value="3"/>
</dbReference>
<dbReference type="SUPFAM" id="SSF47473">
    <property type="entry name" value="EF-hand"/>
    <property type="match status" value="1"/>
</dbReference>
<dbReference type="PROSITE" id="PS00018">
    <property type="entry name" value="EF_HAND_1"/>
    <property type="match status" value="2"/>
</dbReference>
<dbReference type="PROSITE" id="PS50222">
    <property type="entry name" value="EF_HAND_2"/>
    <property type="match status" value="3"/>
</dbReference>